<comment type="function">
    <text evidence="1">Specifically methylates the N4 position of cytidine in position 1402 (C1402) of 16S rRNA.</text>
</comment>
<comment type="catalytic activity">
    <reaction evidence="1">
        <text>cytidine(1402) in 16S rRNA + S-adenosyl-L-methionine = N(4)-methylcytidine(1402) in 16S rRNA + S-adenosyl-L-homocysteine + H(+)</text>
        <dbReference type="Rhea" id="RHEA:42928"/>
        <dbReference type="Rhea" id="RHEA-COMP:10286"/>
        <dbReference type="Rhea" id="RHEA-COMP:10287"/>
        <dbReference type="ChEBI" id="CHEBI:15378"/>
        <dbReference type="ChEBI" id="CHEBI:57856"/>
        <dbReference type="ChEBI" id="CHEBI:59789"/>
        <dbReference type="ChEBI" id="CHEBI:74506"/>
        <dbReference type="ChEBI" id="CHEBI:82748"/>
        <dbReference type="EC" id="2.1.1.199"/>
    </reaction>
</comment>
<comment type="subcellular location">
    <subcellularLocation>
        <location evidence="1">Cytoplasm</location>
    </subcellularLocation>
</comment>
<comment type="similarity">
    <text evidence="1">Belongs to the methyltransferase superfamily. RsmH family.</text>
</comment>
<dbReference type="EC" id="2.1.1.199" evidence="1"/>
<dbReference type="EMBL" id="AE001273">
    <property type="protein sequence ID" value="AAC67865.1"/>
    <property type="molecule type" value="Genomic_DNA"/>
</dbReference>
<dbReference type="PIR" id="E71534">
    <property type="entry name" value="E71534"/>
</dbReference>
<dbReference type="RefSeq" id="NP_219777.1">
    <property type="nucleotide sequence ID" value="NC_000117.1"/>
</dbReference>
<dbReference type="RefSeq" id="WP_009871619.1">
    <property type="nucleotide sequence ID" value="NC_000117.1"/>
</dbReference>
<dbReference type="SMR" id="O84274"/>
<dbReference type="FunCoup" id="O84274">
    <property type="interactions" value="262"/>
</dbReference>
<dbReference type="STRING" id="272561.CT_272"/>
<dbReference type="EnsemblBacteria" id="AAC67865">
    <property type="protein sequence ID" value="AAC67865"/>
    <property type="gene ID" value="CT_272"/>
</dbReference>
<dbReference type="GeneID" id="884852"/>
<dbReference type="KEGG" id="ctr:CT_272"/>
<dbReference type="PATRIC" id="fig|272561.5.peg.291"/>
<dbReference type="HOGENOM" id="CLU_038422_3_0_0"/>
<dbReference type="InParanoid" id="O84274"/>
<dbReference type="OrthoDB" id="9806637at2"/>
<dbReference type="Proteomes" id="UP000000431">
    <property type="component" value="Chromosome"/>
</dbReference>
<dbReference type="GO" id="GO:0005737">
    <property type="term" value="C:cytoplasm"/>
    <property type="evidence" value="ECO:0000318"/>
    <property type="project" value="GO_Central"/>
</dbReference>
<dbReference type="GO" id="GO:0071424">
    <property type="term" value="F:rRNA (cytosine-N4-)-methyltransferase activity"/>
    <property type="evidence" value="ECO:0000318"/>
    <property type="project" value="GO_Central"/>
</dbReference>
<dbReference type="GO" id="GO:0070475">
    <property type="term" value="P:rRNA base methylation"/>
    <property type="evidence" value="ECO:0000318"/>
    <property type="project" value="GO_Central"/>
</dbReference>
<dbReference type="FunFam" id="1.10.150.170:FF:000003">
    <property type="entry name" value="Ribosomal RNA small subunit methyltransferase H"/>
    <property type="match status" value="1"/>
</dbReference>
<dbReference type="Gene3D" id="1.10.150.170">
    <property type="entry name" value="Putative methyltransferase TM0872, insert domain"/>
    <property type="match status" value="1"/>
</dbReference>
<dbReference type="Gene3D" id="3.40.50.150">
    <property type="entry name" value="Vaccinia Virus protein VP39"/>
    <property type="match status" value="1"/>
</dbReference>
<dbReference type="HAMAP" id="MF_01007">
    <property type="entry name" value="16SrRNA_methyltr_H"/>
    <property type="match status" value="1"/>
</dbReference>
<dbReference type="InterPro" id="IPR002903">
    <property type="entry name" value="RsmH"/>
</dbReference>
<dbReference type="InterPro" id="IPR023397">
    <property type="entry name" value="SAM-dep_MeTrfase_MraW_recog"/>
</dbReference>
<dbReference type="InterPro" id="IPR029063">
    <property type="entry name" value="SAM-dependent_MTases_sf"/>
</dbReference>
<dbReference type="NCBIfam" id="TIGR00006">
    <property type="entry name" value="16S rRNA (cytosine(1402)-N(4))-methyltransferase RsmH"/>
    <property type="match status" value="1"/>
</dbReference>
<dbReference type="PANTHER" id="PTHR11265:SF0">
    <property type="entry name" value="12S RRNA N4-METHYLCYTIDINE METHYLTRANSFERASE"/>
    <property type="match status" value="1"/>
</dbReference>
<dbReference type="PANTHER" id="PTHR11265">
    <property type="entry name" value="S-ADENOSYL-METHYLTRANSFERASE MRAW"/>
    <property type="match status" value="1"/>
</dbReference>
<dbReference type="Pfam" id="PF01795">
    <property type="entry name" value="Methyltransf_5"/>
    <property type="match status" value="1"/>
</dbReference>
<dbReference type="PIRSF" id="PIRSF004486">
    <property type="entry name" value="MraW"/>
    <property type="match status" value="1"/>
</dbReference>
<dbReference type="SUPFAM" id="SSF81799">
    <property type="entry name" value="Putative methyltransferase TM0872, insert domain"/>
    <property type="match status" value="1"/>
</dbReference>
<dbReference type="SUPFAM" id="SSF53335">
    <property type="entry name" value="S-adenosyl-L-methionine-dependent methyltransferases"/>
    <property type="match status" value="1"/>
</dbReference>
<sequence length="300" mass="34075">MTDSIPHIPVLVKESLSLFRDRNPVVFCDVTVGAGGHAEAFLTEFPSIERYDGSDRDLSALALSENRLLPFKDRVRLRHASFEEVDTLTSDGTYDGVLADLGVSSMQLNNLERGFSFQGEDHPLDMRMDTSRGMTASEVLNSLREEEIGEIFRNYGEEPLWRSAAAAVVHFRKKKKILTVKDLKDATSGVFPSYRLRKKIHPLTLIFQALRIYVNQEGAQLKVLLDSAFRWLRPGGRLAVISFCSLDDRPVKWAFREAEARGLGKILTKKVIMPSYEETRMNPRSRSAKLRCFEKSFEDK</sequence>
<reference key="1">
    <citation type="journal article" date="1998" name="Science">
        <title>Genome sequence of an obligate intracellular pathogen of humans: Chlamydia trachomatis.</title>
        <authorList>
            <person name="Stephens R.S."/>
            <person name="Kalman S."/>
            <person name="Lammel C.J."/>
            <person name="Fan J."/>
            <person name="Marathe R."/>
            <person name="Aravind L."/>
            <person name="Mitchell W.P."/>
            <person name="Olinger L."/>
            <person name="Tatusov R.L."/>
            <person name="Zhao Q."/>
            <person name="Koonin E.V."/>
            <person name="Davis R.W."/>
        </authorList>
    </citation>
    <scope>NUCLEOTIDE SEQUENCE [LARGE SCALE GENOMIC DNA]</scope>
    <source>
        <strain>ATCC VR-885 / DSM 19411 / UW-3/Cx</strain>
    </source>
</reference>
<gene>
    <name evidence="1" type="primary">rsmH</name>
    <name type="synonym">mraW</name>
    <name type="ordered locus">CT_272</name>
</gene>
<organism>
    <name type="scientific">Chlamydia trachomatis serovar D (strain ATCC VR-885 / DSM 19411 / UW-3/Cx)</name>
    <dbReference type="NCBI Taxonomy" id="272561"/>
    <lineage>
        <taxon>Bacteria</taxon>
        <taxon>Pseudomonadati</taxon>
        <taxon>Chlamydiota</taxon>
        <taxon>Chlamydiia</taxon>
        <taxon>Chlamydiales</taxon>
        <taxon>Chlamydiaceae</taxon>
        <taxon>Chlamydia/Chlamydophila group</taxon>
        <taxon>Chlamydia</taxon>
    </lineage>
</organism>
<proteinExistence type="inferred from homology"/>
<evidence type="ECO:0000255" key="1">
    <source>
        <dbReference type="HAMAP-Rule" id="MF_01007"/>
    </source>
</evidence>
<feature type="chain" id="PRO_0000108608" description="Ribosomal RNA small subunit methyltransferase H">
    <location>
        <begin position="1"/>
        <end position="300"/>
    </location>
</feature>
<feature type="binding site" evidence="1">
    <location>
        <begin position="35"/>
        <end position="37"/>
    </location>
    <ligand>
        <name>S-adenosyl-L-methionine</name>
        <dbReference type="ChEBI" id="CHEBI:59789"/>
    </ligand>
</feature>
<feature type="binding site" evidence="1">
    <location>
        <position position="55"/>
    </location>
    <ligand>
        <name>S-adenosyl-L-methionine</name>
        <dbReference type="ChEBI" id="CHEBI:59789"/>
    </ligand>
</feature>
<feature type="binding site" evidence="1">
    <location>
        <position position="82"/>
    </location>
    <ligand>
        <name>S-adenosyl-L-methionine</name>
        <dbReference type="ChEBI" id="CHEBI:59789"/>
    </ligand>
</feature>
<feature type="binding site" evidence="1">
    <location>
        <position position="100"/>
    </location>
    <ligand>
        <name>S-adenosyl-L-methionine</name>
        <dbReference type="ChEBI" id="CHEBI:59789"/>
    </ligand>
</feature>
<feature type="binding site" evidence="1">
    <location>
        <position position="107"/>
    </location>
    <ligand>
        <name>S-adenosyl-L-methionine</name>
        <dbReference type="ChEBI" id="CHEBI:59789"/>
    </ligand>
</feature>
<protein>
    <recommendedName>
        <fullName evidence="1">Ribosomal RNA small subunit methyltransferase H</fullName>
        <ecNumber evidence="1">2.1.1.199</ecNumber>
    </recommendedName>
    <alternativeName>
        <fullName evidence="1">16S rRNA m(4)C1402 methyltransferase</fullName>
    </alternativeName>
    <alternativeName>
        <fullName evidence="1">rRNA (cytosine-N(4)-)-methyltransferase RsmH</fullName>
    </alternativeName>
</protein>
<name>RSMH_CHLTR</name>
<accession>O84274</accession>
<keyword id="KW-0963">Cytoplasm</keyword>
<keyword id="KW-0489">Methyltransferase</keyword>
<keyword id="KW-1185">Reference proteome</keyword>
<keyword id="KW-0698">rRNA processing</keyword>
<keyword id="KW-0949">S-adenosyl-L-methionine</keyword>
<keyword id="KW-0808">Transferase</keyword>